<feature type="chain" id="PRO_1000214904" description="Large ribosomal subunit protein bL21">
    <location>
        <begin position="1"/>
        <end position="103"/>
    </location>
</feature>
<proteinExistence type="inferred from homology"/>
<gene>
    <name evidence="1" type="primary">rplU</name>
    <name type="ordered locus">Tola_2379</name>
</gene>
<dbReference type="EMBL" id="CP001616">
    <property type="protein sequence ID" value="ACQ93976.1"/>
    <property type="molecule type" value="Genomic_DNA"/>
</dbReference>
<dbReference type="RefSeq" id="WP_015879444.1">
    <property type="nucleotide sequence ID" value="NC_012691.1"/>
</dbReference>
<dbReference type="SMR" id="C4L9M3"/>
<dbReference type="STRING" id="595494.Tola_2379"/>
<dbReference type="KEGG" id="tau:Tola_2379"/>
<dbReference type="eggNOG" id="COG0261">
    <property type="taxonomic scope" value="Bacteria"/>
</dbReference>
<dbReference type="HOGENOM" id="CLU_061463_3_3_6"/>
<dbReference type="OrthoDB" id="9813334at2"/>
<dbReference type="Proteomes" id="UP000009073">
    <property type="component" value="Chromosome"/>
</dbReference>
<dbReference type="GO" id="GO:0005737">
    <property type="term" value="C:cytoplasm"/>
    <property type="evidence" value="ECO:0007669"/>
    <property type="project" value="UniProtKB-ARBA"/>
</dbReference>
<dbReference type="GO" id="GO:1990904">
    <property type="term" value="C:ribonucleoprotein complex"/>
    <property type="evidence" value="ECO:0007669"/>
    <property type="project" value="UniProtKB-KW"/>
</dbReference>
<dbReference type="GO" id="GO:0005840">
    <property type="term" value="C:ribosome"/>
    <property type="evidence" value="ECO:0007669"/>
    <property type="project" value="UniProtKB-KW"/>
</dbReference>
<dbReference type="GO" id="GO:0019843">
    <property type="term" value="F:rRNA binding"/>
    <property type="evidence" value="ECO:0007669"/>
    <property type="project" value="UniProtKB-UniRule"/>
</dbReference>
<dbReference type="GO" id="GO:0003735">
    <property type="term" value="F:structural constituent of ribosome"/>
    <property type="evidence" value="ECO:0007669"/>
    <property type="project" value="InterPro"/>
</dbReference>
<dbReference type="GO" id="GO:0006412">
    <property type="term" value="P:translation"/>
    <property type="evidence" value="ECO:0007669"/>
    <property type="project" value="UniProtKB-UniRule"/>
</dbReference>
<dbReference type="HAMAP" id="MF_01363">
    <property type="entry name" value="Ribosomal_bL21"/>
    <property type="match status" value="1"/>
</dbReference>
<dbReference type="InterPro" id="IPR028909">
    <property type="entry name" value="bL21-like"/>
</dbReference>
<dbReference type="InterPro" id="IPR036164">
    <property type="entry name" value="bL21-like_sf"/>
</dbReference>
<dbReference type="InterPro" id="IPR001787">
    <property type="entry name" value="Ribosomal_bL21"/>
</dbReference>
<dbReference type="InterPro" id="IPR018258">
    <property type="entry name" value="Ribosomal_bL21_CS"/>
</dbReference>
<dbReference type="NCBIfam" id="TIGR00061">
    <property type="entry name" value="L21"/>
    <property type="match status" value="1"/>
</dbReference>
<dbReference type="PANTHER" id="PTHR21349">
    <property type="entry name" value="50S RIBOSOMAL PROTEIN L21"/>
    <property type="match status" value="1"/>
</dbReference>
<dbReference type="PANTHER" id="PTHR21349:SF0">
    <property type="entry name" value="LARGE RIBOSOMAL SUBUNIT PROTEIN BL21M"/>
    <property type="match status" value="1"/>
</dbReference>
<dbReference type="Pfam" id="PF00829">
    <property type="entry name" value="Ribosomal_L21p"/>
    <property type="match status" value="1"/>
</dbReference>
<dbReference type="SUPFAM" id="SSF141091">
    <property type="entry name" value="L21p-like"/>
    <property type="match status" value="1"/>
</dbReference>
<dbReference type="PROSITE" id="PS01169">
    <property type="entry name" value="RIBOSOMAL_L21"/>
    <property type="match status" value="1"/>
</dbReference>
<protein>
    <recommendedName>
        <fullName evidence="1">Large ribosomal subunit protein bL21</fullName>
    </recommendedName>
    <alternativeName>
        <fullName evidence="2">50S ribosomal protein L21</fullName>
    </alternativeName>
</protein>
<evidence type="ECO:0000255" key="1">
    <source>
        <dbReference type="HAMAP-Rule" id="MF_01363"/>
    </source>
</evidence>
<evidence type="ECO:0000305" key="2"/>
<reference key="1">
    <citation type="submission" date="2009-05" db="EMBL/GenBank/DDBJ databases">
        <title>Complete sequence of Tolumonas auensis DSM 9187.</title>
        <authorList>
            <consortium name="US DOE Joint Genome Institute"/>
            <person name="Lucas S."/>
            <person name="Copeland A."/>
            <person name="Lapidus A."/>
            <person name="Glavina del Rio T."/>
            <person name="Tice H."/>
            <person name="Bruce D."/>
            <person name="Goodwin L."/>
            <person name="Pitluck S."/>
            <person name="Chertkov O."/>
            <person name="Brettin T."/>
            <person name="Detter J.C."/>
            <person name="Han C."/>
            <person name="Larimer F."/>
            <person name="Land M."/>
            <person name="Hauser L."/>
            <person name="Kyrpides N."/>
            <person name="Mikhailova N."/>
            <person name="Spring S."/>
            <person name="Beller H."/>
        </authorList>
    </citation>
    <scope>NUCLEOTIDE SEQUENCE [LARGE SCALE GENOMIC DNA]</scope>
    <source>
        <strain>DSM 9187 / NBRC 110442 / TA 4</strain>
    </source>
</reference>
<name>RL21_TOLAT</name>
<comment type="function">
    <text evidence="1">This protein binds to 23S rRNA in the presence of protein L20.</text>
</comment>
<comment type="subunit">
    <text evidence="1">Part of the 50S ribosomal subunit. Contacts protein L20.</text>
</comment>
<comment type="similarity">
    <text evidence="1">Belongs to the bacterial ribosomal protein bL21 family.</text>
</comment>
<organism>
    <name type="scientific">Tolumonas auensis (strain DSM 9187 / NBRC 110442 / TA 4)</name>
    <dbReference type="NCBI Taxonomy" id="595494"/>
    <lineage>
        <taxon>Bacteria</taxon>
        <taxon>Pseudomonadati</taxon>
        <taxon>Pseudomonadota</taxon>
        <taxon>Gammaproteobacteria</taxon>
        <taxon>Aeromonadales</taxon>
        <taxon>Aeromonadaceae</taxon>
        <taxon>Tolumonas</taxon>
    </lineage>
</organism>
<accession>C4L9M3</accession>
<sequence>MYAVILSGGKQHRVAEGQVLRLEKLEAATGAAVEFDKVLMVTNGDDVKVGAPYVAGGKVVAEVVAHGRGDKVHIVKFRRRKHHRKQAGHRQWFTEVKITAINA</sequence>
<keyword id="KW-1185">Reference proteome</keyword>
<keyword id="KW-0687">Ribonucleoprotein</keyword>
<keyword id="KW-0689">Ribosomal protein</keyword>
<keyword id="KW-0694">RNA-binding</keyword>
<keyword id="KW-0699">rRNA-binding</keyword>